<feature type="peptide" id="PRO_0000345058" description="Phenol-soluble modulin alpha 3 peptide">
    <location>
        <begin position="1"/>
        <end position="22"/>
    </location>
</feature>
<evidence type="ECO:0000250" key="1">
    <source>
        <dbReference type="UniProtKB" id="A9JX07"/>
    </source>
</evidence>
<evidence type="ECO:0000305" key="2"/>
<name>PSMA3_STAA2</name>
<comment type="function">
    <text evidence="1">Peptide which can recruit, activate and subsequently lyse human neutrophils, thus eliminating the main cellular defense against infection.</text>
</comment>
<comment type="similarity">
    <text evidence="2">Belongs to the phenol-soluble modulin alpha peptides family.</text>
</comment>
<keyword id="KW-0204">Cytolysis</keyword>
<keyword id="KW-0843">Virulence</keyword>
<accession>P0C803</accession>
<gene>
    <name type="primary">psmA3</name>
    <name type="ordered locus">SaurJH1_0486.2</name>
</gene>
<protein>
    <recommendedName>
        <fullName>Phenol-soluble modulin alpha 3 peptide</fullName>
    </recommendedName>
</protein>
<dbReference type="EMBL" id="CP000736">
    <property type="status" value="NOT_ANNOTATED_CDS"/>
    <property type="molecule type" value="Genomic_DNA"/>
</dbReference>
<dbReference type="SMR" id="P0C803"/>
<dbReference type="GO" id="GO:0031640">
    <property type="term" value="P:killing of cells of another organism"/>
    <property type="evidence" value="ECO:0007669"/>
    <property type="project" value="UniProtKB-KW"/>
</dbReference>
<dbReference type="InterPro" id="IPR031429">
    <property type="entry name" value="PSM_alpha"/>
</dbReference>
<dbReference type="InterPro" id="IPR053383">
    <property type="entry name" value="PSM_alpha_peptides"/>
</dbReference>
<dbReference type="NCBIfam" id="NF033426">
    <property type="entry name" value="PSM_alpha_3"/>
    <property type="match status" value="1"/>
</dbReference>
<dbReference type="Pfam" id="PF17063">
    <property type="entry name" value="PSMalpha"/>
    <property type="match status" value="1"/>
</dbReference>
<organism>
    <name type="scientific">Staphylococcus aureus (strain JH1)</name>
    <dbReference type="NCBI Taxonomy" id="359787"/>
    <lineage>
        <taxon>Bacteria</taxon>
        <taxon>Bacillati</taxon>
        <taxon>Bacillota</taxon>
        <taxon>Bacilli</taxon>
        <taxon>Bacillales</taxon>
        <taxon>Staphylococcaceae</taxon>
        <taxon>Staphylococcus</taxon>
    </lineage>
</organism>
<reference key="1">
    <citation type="submission" date="2007-06" db="EMBL/GenBank/DDBJ databases">
        <title>Complete sequence of chromosome of Staphylococcus aureus subsp. aureus JH1.</title>
        <authorList>
            <consortium name="US DOE Joint Genome Institute"/>
            <person name="Copeland A."/>
            <person name="Lucas S."/>
            <person name="Lapidus A."/>
            <person name="Barry K."/>
            <person name="Detter J.C."/>
            <person name="Glavina del Rio T."/>
            <person name="Hammon N."/>
            <person name="Israni S."/>
            <person name="Dalin E."/>
            <person name="Tice H."/>
            <person name="Pitluck S."/>
            <person name="Chain P."/>
            <person name="Malfatti S."/>
            <person name="Shin M."/>
            <person name="Vergez L."/>
            <person name="Schmutz J."/>
            <person name="Larimer F."/>
            <person name="Land M."/>
            <person name="Hauser L."/>
            <person name="Kyrpides N."/>
            <person name="Ivanova N."/>
            <person name="Tomasz A."/>
            <person name="Richardson P."/>
        </authorList>
    </citation>
    <scope>NUCLEOTIDE SEQUENCE [LARGE SCALE GENOMIC DNA]</scope>
    <source>
        <strain>JH1</strain>
    </source>
</reference>
<proteinExistence type="inferred from homology"/>
<sequence>MEFVAKLFKFFKDLLGKFLGNN</sequence>